<reference key="1">
    <citation type="journal article" date="2018" name="ACS Chem. Biol.">
        <title>Characterization of a prenyltransferase for iso-A82775C biosynthesis and generation of new congeners of chloropestolides.</title>
        <authorList>
            <person name="Pan Y."/>
            <person name="Liu L."/>
            <person name="Guan F."/>
            <person name="Li E."/>
            <person name="Jin J."/>
            <person name="Li J."/>
            <person name="Che Y."/>
            <person name="Liu G."/>
        </authorList>
    </citation>
    <scope>NUCLEOTIDE SEQUENCE [GENOMIC DNA]</scope>
    <scope>FUNCTION</scope>
    <scope>DISRUPTION PHENOTYPE</scope>
    <scope>INDUCTION</scope>
    <scope>PATHWAY</scope>
    <source>
        <strain>W106-1 / CGMCC3.15140</strain>
    </source>
</reference>
<reference key="2">
    <citation type="journal article" date="2015" name="BMC Genomics">
        <title>Genomic and transcriptomic analysis of the endophytic fungus Pestalotiopsis fici reveals its lifestyle and high potential for synthesis of natural products.</title>
        <authorList>
            <person name="Wang X."/>
            <person name="Zhang X."/>
            <person name="Liu L."/>
            <person name="Xiang M."/>
            <person name="Wang W."/>
            <person name="Sun X."/>
            <person name="Che Y."/>
            <person name="Guo L."/>
            <person name="Liu G."/>
            <person name="Guo L."/>
            <person name="Wang C."/>
            <person name="Yin W.B."/>
            <person name="Stadler M."/>
            <person name="Zhang X."/>
            <person name="Liu X."/>
        </authorList>
    </citation>
    <scope>NUCLEOTIDE SEQUENCE [LARGE SCALE GENOMIC DNA]</scope>
    <source>
        <strain>W106-1 / CGMCC3.15140</strain>
    </source>
</reference>
<accession>A0A1J0HSP5</accession>
<accession>W3XJ23</accession>
<evidence type="ECO:0000250" key="1">
    <source>
        <dbReference type="UniProtKB" id="L0E2Z4"/>
    </source>
</evidence>
<evidence type="ECO:0000250" key="2">
    <source>
        <dbReference type="UniProtKB" id="O93868"/>
    </source>
</evidence>
<evidence type="ECO:0000269" key="3">
    <source>
    </source>
</evidence>
<evidence type="ECO:0000303" key="4">
    <source>
    </source>
</evidence>
<evidence type="ECO:0000305" key="5"/>
<evidence type="ECO:0000305" key="6">
    <source>
    </source>
</evidence>
<dbReference type="EC" id="1.1.1.-" evidence="6"/>
<dbReference type="EMBL" id="KU963195">
    <property type="protein sequence ID" value="APC57599.1"/>
    <property type="molecule type" value="Genomic_DNA"/>
</dbReference>
<dbReference type="EMBL" id="KI912110">
    <property type="protein sequence ID" value="ETS86019.1"/>
    <property type="molecule type" value="Genomic_DNA"/>
</dbReference>
<dbReference type="RefSeq" id="XP_007830816.1">
    <property type="nucleotide sequence ID" value="XM_007832625.1"/>
</dbReference>
<dbReference type="SMR" id="A0A1J0HSP5"/>
<dbReference type="GeneID" id="19269057"/>
<dbReference type="KEGG" id="pfy:PFICI_04044"/>
<dbReference type="eggNOG" id="ENOG502SMMV">
    <property type="taxonomic scope" value="Eukaryota"/>
</dbReference>
<dbReference type="HOGENOM" id="CLU_078552_0_0_1"/>
<dbReference type="InParanoid" id="A0A1J0HSP5"/>
<dbReference type="OMA" id="TVEANIC"/>
<dbReference type="OrthoDB" id="10254221at2759"/>
<dbReference type="Proteomes" id="UP000030651">
    <property type="component" value="Unassembled WGS sequence"/>
</dbReference>
<dbReference type="GO" id="GO:0016491">
    <property type="term" value="F:oxidoreductase activity"/>
    <property type="evidence" value="ECO:0007669"/>
    <property type="project" value="UniProtKB-KW"/>
</dbReference>
<dbReference type="CDD" id="cd05233">
    <property type="entry name" value="SDR_c"/>
    <property type="match status" value="1"/>
</dbReference>
<dbReference type="Gene3D" id="3.40.50.720">
    <property type="entry name" value="NAD(P)-binding Rossmann-like Domain"/>
    <property type="match status" value="1"/>
</dbReference>
<dbReference type="InterPro" id="IPR036291">
    <property type="entry name" value="NAD(P)-bd_dom_sf"/>
</dbReference>
<dbReference type="InterPro" id="IPR002347">
    <property type="entry name" value="SDR_fam"/>
</dbReference>
<dbReference type="PANTHER" id="PTHR43669">
    <property type="entry name" value="5-KETO-D-GLUCONATE 5-REDUCTASE"/>
    <property type="match status" value="1"/>
</dbReference>
<dbReference type="PANTHER" id="PTHR43669:SF3">
    <property type="entry name" value="ALCOHOL DEHYDROGENASE, PUTATIVE (AFU_ORTHOLOGUE AFUA_3G03445)-RELATED"/>
    <property type="match status" value="1"/>
</dbReference>
<dbReference type="Pfam" id="PF00106">
    <property type="entry name" value="adh_short"/>
    <property type="match status" value="1"/>
</dbReference>
<dbReference type="SUPFAM" id="SSF51735">
    <property type="entry name" value="NAD(P)-binding Rossmann-fold domains"/>
    <property type="match status" value="1"/>
</dbReference>
<sequence length="248" mass="26817">MTETVLVIGATGHIGVSAVIGALRTKRNVLAVVRNAAAVDKLFRLAGTRDGITTVEADITSEHGLQSVVDKVKNGELPAFQHVYSAVGGVKTTTPLKDLSIEDFRANMSINFDTNFFAYRATIGYLLSQSNPTTYTVITGAIGDVGIWPGPAMSQGALYSLGISAELENRDTNVRFNEMYLAFPVMVDEEAVKEEAAKMGVVKASDFARSYENLLAKDEIKGSRIFIFTPGDIDTLRWESKAFKGPPS</sequence>
<organism>
    <name type="scientific">Pestalotiopsis fici (strain W106-1 / CGMCC3.15140)</name>
    <dbReference type="NCBI Taxonomy" id="1229662"/>
    <lineage>
        <taxon>Eukaryota</taxon>
        <taxon>Fungi</taxon>
        <taxon>Dikarya</taxon>
        <taxon>Ascomycota</taxon>
        <taxon>Pezizomycotina</taxon>
        <taxon>Sordariomycetes</taxon>
        <taxon>Xylariomycetidae</taxon>
        <taxon>Amphisphaeriales</taxon>
        <taxon>Sporocadaceae</taxon>
        <taxon>Pestalotiopsis</taxon>
    </lineage>
</organism>
<proteinExistence type="evidence at protein level"/>
<protein>
    <recommendedName>
        <fullName evidence="4">Short-chain dehydrogenase/reductase iacG</fullName>
        <ecNumber evidence="6">1.1.1.-</ecNumber>
    </recommendedName>
    <alternativeName>
        <fullName evidence="4">Iso-A82775C biosynthesis cluster protein G</fullName>
    </alternativeName>
</protein>
<name>IACG_PESFW</name>
<comment type="function">
    <text evidence="3 6">Short-chain dehydrogenase/reductase; part of the gene cluster that mediates the biosynthesis of iso-A82775C, a enylepoxycyclohexane and biosynthetic precursor of the chloropestolide anticancer natural products (PubMed:29384350). Within the cluster, the prenyltransferase iacE prenylates siccayne to generate pestalodiol E, using dimethylallyl diphosphate (DMAPP) as cosubstrate (PubMed:29384350). The probable oxidoreductase iacF is then involved in the epoxidation of pestalodiol F to pestalodiol F, which is further converted to pestalofone A by the short-chain dehydrogenase/reductase iacG (PubMed:29384350). Iso-A82775C is subsequently generated from pestalofone A by the short-chain dehydrogenase/reductase iacC (PubMed:29384350). Iso-A82775C is further condensed with maldoxin via a Diels-Alder reaction to produce the anticancer natural products chloropestolides A to E (Probable).</text>
</comment>
<comment type="pathway">
    <text evidence="3">Secondary metabolite biosynthesis.</text>
</comment>
<comment type="induction">
    <text evidence="3">Expression is co-regulated with the other genes from the iso-A82775C biosynthesis cluster and probably controlled by the cluster-specific transcription factors iacI and iacK.</text>
</comment>
<comment type="disruption phenotype">
    <text evidence="3">Reduced strongly the production of iso-A82775C and accumulates pestalodiol F.</text>
</comment>
<comment type="biotechnology">
    <text evidence="3">Iso-A82775C is a precursor for the biosynthesis of the anticancer natural products chloropestolides A to E via a Diesls-Alder reaction with maldoxin (PubMed:29384350). In the absence of the prenyltransferase iacE, siccayne accumulates instead of iso-A82775C and can also be condensed with maldoxin to produce chloropestolides H to K, which show also antibacterial and anticancer properties (PubMed:29384350).</text>
</comment>
<comment type="similarity">
    <text evidence="5">Belongs to the short-chain dehydrogenases/reductases (SDR) family.</text>
</comment>
<gene>
    <name evidence="4" type="primary">iacG</name>
    <name type="ORF">PFICI_04044</name>
</gene>
<feature type="chain" id="PRO_0000451379" description="Short-chain dehydrogenase/reductase iacG">
    <location>
        <begin position="1"/>
        <end position="248"/>
    </location>
</feature>
<feature type="binding site" evidence="1">
    <location>
        <position position="14"/>
    </location>
    <ligand>
        <name>NADP(+)</name>
        <dbReference type="ChEBI" id="CHEBI:58349"/>
    </ligand>
</feature>
<feature type="binding site" evidence="1">
    <location>
        <position position="35"/>
    </location>
    <ligand>
        <name>NADP(+)</name>
        <dbReference type="ChEBI" id="CHEBI:58349"/>
    </ligand>
</feature>
<feature type="binding site" evidence="1">
    <location>
        <position position="41"/>
    </location>
    <ligand>
        <name>NADP(+)</name>
        <dbReference type="ChEBI" id="CHEBI:58349"/>
    </ligand>
</feature>
<feature type="binding site" evidence="1">
    <location>
        <position position="58"/>
    </location>
    <ligand>
        <name>NADP(+)</name>
        <dbReference type="ChEBI" id="CHEBI:58349"/>
    </ligand>
</feature>
<feature type="binding site" evidence="1">
    <location>
        <position position="120"/>
    </location>
    <ligand>
        <name>NADP(+)</name>
        <dbReference type="ChEBI" id="CHEBI:58349"/>
    </ligand>
</feature>
<feature type="binding site" evidence="2">
    <location>
        <position position="187"/>
    </location>
    <ligand>
        <name>NADP(+)</name>
        <dbReference type="ChEBI" id="CHEBI:58349"/>
    </ligand>
</feature>
<keyword id="KW-0521">NADP</keyword>
<keyword id="KW-0560">Oxidoreductase</keyword>
<keyword id="KW-1185">Reference proteome</keyword>